<proteinExistence type="evidence at protein level"/>
<evidence type="ECO:0000250" key="1"/>
<evidence type="ECO:0000256" key="2">
    <source>
        <dbReference type="SAM" id="MobiDB-lite"/>
    </source>
</evidence>
<evidence type="ECO:0000303" key="3">
    <source>
    </source>
</evidence>
<evidence type="ECO:0000305" key="4"/>
<evidence type="ECO:0007744" key="5">
    <source>
    </source>
</evidence>
<accession>O80439</accession>
<sequence>MASLILGAPPRVTVALPSSRLSSSHSETAGVSLSCFTHQFSLSTSSSSSIPLVYCGRGDRKTAKGKRFNHSFGNARPRNKSKGRGPERVPVPPAPPRKDKFENDEKIKIDIDESLFSN</sequence>
<organism>
    <name type="scientific">Arabidopsis thaliana</name>
    <name type="common">Mouse-ear cress</name>
    <dbReference type="NCBI Taxonomy" id="3702"/>
    <lineage>
        <taxon>Eukaryota</taxon>
        <taxon>Viridiplantae</taxon>
        <taxon>Streptophyta</taxon>
        <taxon>Embryophyta</taxon>
        <taxon>Tracheophyta</taxon>
        <taxon>Spermatophyta</taxon>
        <taxon>Magnoliopsida</taxon>
        <taxon>eudicotyledons</taxon>
        <taxon>Gunneridae</taxon>
        <taxon>Pentapetalae</taxon>
        <taxon>rosids</taxon>
        <taxon>malvids</taxon>
        <taxon>Brassicales</taxon>
        <taxon>Brassicaceae</taxon>
        <taxon>Camelineae</taxon>
        <taxon>Arabidopsis</taxon>
    </lineage>
</organism>
<keyword id="KW-0150">Chloroplast</keyword>
<keyword id="KW-0597">Phosphoprotein</keyword>
<keyword id="KW-0934">Plastid</keyword>
<keyword id="KW-1185">Reference proteome</keyword>
<keyword id="KW-0687">Ribonucleoprotein</keyword>
<keyword id="KW-0689">Ribosomal protein</keyword>
<keyword id="KW-0809">Transit peptide</keyword>
<gene>
    <name type="primary">RPS31</name>
    <name type="synonym">PSRP4</name>
    <name type="ordered locus">At2g38140</name>
    <name type="ORF">F16M14.7</name>
</gene>
<protein>
    <recommendedName>
        <fullName evidence="3">Small ribosomal subunit protein bTHXc</fullName>
    </recommendedName>
    <alternativeName>
        <fullName>30S ribosomal protein S31, chloroplastic</fullName>
    </alternativeName>
    <alternativeName>
        <fullName>Plastid-specific 30S ribosomal protein 4</fullName>
        <shortName>PSRP-4</shortName>
    </alternativeName>
</protein>
<comment type="subunit">
    <text>Part of the 30S ribosomal subunit.</text>
</comment>
<comment type="subcellular location">
    <subcellularLocation>
        <location>Plastid</location>
        <location>Chloroplast</location>
    </subcellularLocation>
</comment>
<comment type="similarity">
    <text evidence="4">Belongs to the bacterial ribosomal protein bTHX family.</text>
</comment>
<feature type="transit peptide" description="Chloroplast" evidence="1">
    <location>
        <begin position="1"/>
        <end position="55"/>
    </location>
</feature>
<feature type="chain" id="PRO_0000249225" description="Small ribosomal subunit protein bTHXc">
    <location>
        <begin position="56"/>
        <end position="118"/>
    </location>
</feature>
<feature type="region of interest" description="Disordered" evidence="2">
    <location>
        <begin position="61"/>
        <end position="118"/>
    </location>
</feature>
<feature type="compositionally biased region" description="Basic and acidic residues" evidence="2">
    <location>
        <begin position="96"/>
        <end position="111"/>
    </location>
</feature>
<feature type="modified residue" description="Phosphoserine" evidence="5">
    <location>
        <position position="117"/>
    </location>
</feature>
<dbReference type="EMBL" id="AF236826">
    <property type="protein sequence ID" value="AAF64153.1"/>
    <property type="molecule type" value="mRNA"/>
</dbReference>
<dbReference type="EMBL" id="AC003028">
    <property type="protein sequence ID" value="AAC27163.1"/>
    <property type="molecule type" value="Genomic_DNA"/>
</dbReference>
<dbReference type="EMBL" id="CP002685">
    <property type="protein sequence ID" value="AEC09494.1"/>
    <property type="molecule type" value="Genomic_DNA"/>
</dbReference>
<dbReference type="EMBL" id="AY052215">
    <property type="protein sequence ID" value="AAK97685.1"/>
    <property type="molecule type" value="mRNA"/>
</dbReference>
<dbReference type="EMBL" id="AY060491">
    <property type="protein sequence ID" value="AAL31104.1"/>
    <property type="molecule type" value="mRNA"/>
</dbReference>
<dbReference type="EMBL" id="AY088244">
    <property type="protein sequence ID" value="AAM67339.1"/>
    <property type="molecule type" value="mRNA"/>
</dbReference>
<dbReference type="PIR" id="T01246">
    <property type="entry name" value="T01246"/>
</dbReference>
<dbReference type="RefSeq" id="NP_181349.1">
    <property type="nucleotide sequence ID" value="NM_129370.5"/>
</dbReference>
<dbReference type="SMR" id="O80439"/>
<dbReference type="BioGRID" id="3736">
    <property type="interactions" value="3"/>
</dbReference>
<dbReference type="FunCoup" id="O80439">
    <property type="interactions" value="1471"/>
</dbReference>
<dbReference type="IntAct" id="O80439">
    <property type="interactions" value="3"/>
</dbReference>
<dbReference type="STRING" id="3702.O80439"/>
<dbReference type="GlyGen" id="O80439">
    <property type="glycosylation" value="1 site"/>
</dbReference>
<dbReference type="iPTMnet" id="O80439"/>
<dbReference type="PaxDb" id="3702-AT2G38140.1"/>
<dbReference type="ProteomicsDB" id="228079"/>
<dbReference type="EnsemblPlants" id="AT2G38140.1">
    <property type="protein sequence ID" value="AT2G38140.1"/>
    <property type="gene ID" value="AT2G38140"/>
</dbReference>
<dbReference type="GeneID" id="818392"/>
<dbReference type="Gramene" id="AT2G38140.1">
    <property type="protein sequence ID" value="AT2G38140.1"/>
    <property type="gene ID" value="AT2G38140"/>
</dbReference>
<dbReference type="KEGG" id="ath:AT2G38140"/>
<dbReference type="Araport" id="AT2G38140"/>
<dbReference type="TAIR" id="AT2G38140">
    <property type="gene designation" value="PSRP4"/>
</dbReference>
<dbReference type="eggNOG" id="ENOG502S3P4">
    <property type="taxonomic scope" value="Eukaryota"/>
</dbReference>
<dbReference type="HOGENOM" id="CLU_132314_1_0_1"/>
<dbReference type="InParanoid" id="O80439"/>
<dbReference type="OMA" id="APPMASH"/>
<dbReference type="PhylomeDB" id="O80439"/>
<dbReference type="PRO" id="PR:O80439"/>
<dbReference type="Proteomes" id="UP000006548">
    <property type="component" value="Chromosome 2"/>
</dbReference>
<dbReference type="ExpressionAtlas" id="O80439">
    <property type="expression patterns" value="baseline and differential"/>
</dbReference>
<dbReference type="GO" id="GO:0009507">
    <property type="term" value="C:chloroplast"/>
    <property type="evidence" value="ECO:0000314"/>
    <property type="project" value="TAIR"/>
</dbReference>
<dbReference type="GO" id="GO:0009941">
    <property type="term" value="C:chloroplast envelope"/>
    <property type="evidence" value="ECO:0007005"/>
    <property type="project" value="TAIR"/>
</dbReference>
<dbReference type="GO" id="GO:0009570">
    <property type="term" value="C:chloroplast stroma"/>
    <property type="evidence" value="ECO:0007005"/>
    <property type="project" value="TAIR"/>
</dbReference>
<dbReference type="GO" id="GO:0005783">
    <property type="term" value="C:endoplasmic reticulum"/>
    <property type="evidence" value="ECO:0007005"/>
    <property type="project" value="TAIR"/>
</dbReference>
<dbReference type="GO" id="GO:1990904">
    <property type="term" value="C:ribonucleoprotein complex"/>
    <property type="evidence" value="ECO:0007669"/>
    <property type="project" value="UniProtKB-KW"/>
</dbReference>
<dbReference type="GO" id="GO:0005840">
    <property type="term" value="C:ribosome"/>
    <property type="evidence" value="ECO:0007669"/>
    <property type="project" value="UniProtKB-KW"/>
</dbReference>
<dbReference type="GO" id="GO:0003729">
    <property type="term" value="F:mRNA binding"/>
    <property type="evidence" value="ECO:0000314"/>
    <property type="project" value="TAIR"/>
</dbReference>
<dbReference type="GO" id="GO:0032544">
    <property type="term" value="P:plastid translation"/>
    <property type="evidence" value="ECO:0000315"/>
    <property type="project" value="TAIR"/>
</dbReference>
<dbReference type="InterPro" id="IPR030826">
    <property type="entry name" value="Ribosomal_bTHX/bTHXc/bTHXm"/>
</dbReference>
<dbReference type="InterPro" id="IPR044695">
    <property type="entry name" value="Ribosomal_bTHXc/bTHXc_plant"/>
</dbReference>
<dbReference type="NCBIfam" id="TIGR04560">
    <property type="entry name" value="ribo_THX"/>
    <property type="match status" value="1"/>
</dbReference>
<dbReference type="PANTHER" id="PTHR34550">
    <property type="entry name" value="30S RIBOSOMAL PROTEIN S31, CHLOROPLASTIC"/>
    <property type="match status" value="1"/>
</dbReference>
<dbReference type="PANTHER" id="PTHR34550:SF2">
    <property type="entry name" value="SMALL RIBOSOMAL SUBUNIT PROTEIN BTHXC"/>
    <property type="match status" value="1"/>
</dbReference>
<dbReference type="Pfam" id="PF17067">
    <property type="entry name" value="RPS31"/>
    <property type="match status" value="1"/>
</dbReference>
<name>RR31_ARATH</name>
<reference key="1">
    <citation type="journal article" date="2003" name="Eur. J. Biochem.">
        <title>Proteomic identification of all plastid-specific ribosomal proteins in higher plant chloroplast 30S ribosomal subunit.</title>
        <authorList>
            <person name="Yamaguchi K."/>
            <person name="Subramanian A.R."/>
        </authorList>
    </citation>
    <scope>NUCLEOTIDE SEQUENCE [MRNA]</scope>
</reference>
<reference key="2">
    <citation type="journal article" date="1999" name="Nature">
        <title>Sequence and analysis of chromosome 2 of the plant Arabidopsis thaliana.</title>
        <authorList>
            <person name="Lin X."/>
            <person name="Kaul S."/>
            <person name="Rounsley S.D."/>
            <person name="Shea T.P."/>
            <person name="Benito M.-I."/>
            <person name="Town C.D."/>
            <person name="Fujii C.Y."/>
            <person name="Mason T.M."/>
            <person name="Bowman C.L."/>
            <person name="Barnstead M.E."/>
            <person name="Feldblyum T.V."/>
            <person name="Buell C.R."/>
            <person name="Ketchum K.A."/>
            <person name="Lee J.J."/>
            <person name="Ronning C.M."/>
            <person name="Koo H.L."/>
            <person name="Moffat K.S."/>
            <person name="Cronin L.A."/>
            <person name="Shen M."/>
            <person name="Pai G."/>
            <person name="Van Aken S."/>
            <person name="Umayam L."/>
            <person name="Tallon L.J."/>
            <person name="Gill J.E."/>
            <person name="Adams M.D."/>
            <person name="Carrera A.J."/>
            <person name="Creasy T.H."/>
            <person name="Goodman H.M."/>
            <person name="Somerville C.R."/>
            <person name="Copenhaver G.P."/>
            <person name="Preuss D."/>
            <person name="Nierman W.C."/>
            <person name="White O."/>
            <person name="Eisen J.A."/>
            <person name="Salzberg S.L."/>
            <person name="Fraser C.M."/>
            <person name="Venter J.C."/>
        </authorList>
    </citation>
    <scope>NUCLEOTIDE SEQUENCE [LARGE SCALE GENOMIC DNA]</scope>
    <source>
        <strain>cv. Columbia</strain>
    </source>
</reference>
<reference key="3">
    <citation type="journal article" date="2017" name="Plant J.">
        <title>Araport11: a complete reannotation of the Arabidopsis thaliana reference genome.</title>
        <authorList>
            <person name="Cheng C.Y."/>
            <person name="Krishnakumar V."/>
            <person name="Chan A.P."/>
            <person name="Thibaud-Nissen F."/>
            <person name="Schobel S."/>
            <person name="Town C.D."/>
        </authorList>
    </citation>
    <scope>GENOME REANNOTATION</scope>
    <source>
        <strain>cv. Columbia</strain>
    </source>
</reference>
<reference key="4">
    <citation type="journal article" date="2003" name="Science">
        <title>Empirical analysis of transcriptional activity in the Arabidopsis genome.</title>
        <authorList>
            <person name="Yamada K."/>
            <person name="Lim J."/>
            <person name="Dale J.M."/>
            <person name="Chen H."/>
            <person name="Shinn P."/>
            <person name="Palm C.J."/>
            <person name="Southwick A.M."/>
            <person name="Wu H.C."/>
            <person name="Kim C.J."/>
            <person name="Nguyen M."/>
            <person name="Pham P.K."/>
            <person name="Cheuk R.F."/>
            <person name="Karlin-Newmann G."/>
            <person name="Liu S.X."/>
            <person name="Lam B."/>
            <person name="Sakano H."/>
            <person name="Wu T."/>
            <person name="Yu G."/>
            <person name="Miranda M."/>
            <person name="Quach H.L."/>
            <person name="Tripp M."/>
            <person name="Chang C.H."/>
            <person name="Lee J.M."/>
            <person name="Toriumi M.J."/>
            <person name="Chan M.M."/>
            <person name="Tang C.C."/>
            <person name="Onodera C.S."/>
            <person name="Deng J.M."/>
            <person name="Akiyama K."/>
            <person name="Ansari Y."/>
            <person name="Arakawa T."/>
            <person name="Banh J."/>
            <person name="Banno F."/>
            <person name="Bowser L."/>
            <person name="Brooks S.Y."/>
            <person name="Carninci P."/>
            <person name="Chao Q."/>
            <person name="Choy N."/>
            <person name="Enju A."/>
            <person name="Goldsmith A.D."/>
            <person name="Gurjal M."/>
            <person name="Hansen N.F."/>
            <person name="Hayashizaki Y."/>
            <person name="Johnson-Hopson C."/>
            <person name="Hsuan V.W."/>
            <person name="Iida K."/>
            <person name="Karnes M."/>
            <person name="Khan S."/>
            <person name="Koesema E."/>
            <person name="Ishida J."/>
            <person name="Jiang P.X."/>
            <person name="Jones T."/>
            <person name="Kawai J."/>
            <person name="Kamiya A."/>
            <person name="Meyers C."/>
            <person name="Nakajima M."/>
            <person name="Narusaka M."/>
            <person name="Seki M."/>
            <person name="Sakurai T."/>
            <person name="Satou M."/>
            <person name="Tamse R."/>
            <person name="Vaysberg M."/>
            <person name="Wallender E.K."/>
            <person name="Wong C."/>
            <person name="Yamamura Y."/>
            <person name="Yuan S."/>
            <person name="Shinozaki K."/>
            <person name="Davis R.W."/>
            <person name="Theologis A."/>
            <person name="Ecker J.R."/>
        </authorList>
    </citation>
    <scope>NUCLEOTIDE SEQUENCE [LARGE SCALE MRNA]</scope>
    <source>
        <strain>cv. Columbia</strain>
    </source>
</reference>
<reference key="5">
    <citation type="submission" date="2002-03" db="EMBL/GenBank/DDBJ databases">
        <title>Full-length cDNA from Arabidopsis thaliana.</title>
        <authorList>
            <person name="Brover V.V."/>
            <person name="Troukhan M.E."/>
            <person name="Alexandrov N.A."/>
            <person name="Lu Y.-P."/>
            <person name="Flavell R.B."/>
            <person name="Feldmann K.A."/>
        </authorList>
    </citation>
    <scope>NUCLEOTIDE SEQUENCE [LARGE SCALE MRNA]</scope>
</reference>
<reference key="6">
    <citation type="journal article" date="2009" name="Plant Physiol.">
        <title>Large-scale Arabidopsis phosphoproteome profiling reveals novel chloroplast kinase substrates and phosphorylation networks.</title>
        <authorList>
            <person name="Reiland S."/>
            <person name="Messerli G."/>
            <person name="Baerenfaller K."/>
            <person name="Gerrits B."/>
            <person name="Endler A."/>
            <person name="Grossmann J."/>
            <person name="Gruissem W."/>
            <person name="Baginsky S."/>
        </authorList>
    </citation>
    <scope>PHOSPHORYLATION [LARGE SCALE ANALYSIS] AT SER-117</scope>
    <scope>IDENTIFICATION BY MASS SPECTROMETRY [LARGE SCALE ANALYSIS]</scope>
</reference>
<reference key="7">
    <citation type="journal article" date="2023" name="Plant Cell">
        <title>An updated nomenclature for plant ribosomal protein genes.</title>
        <authorList>
            <person name="Scarpin M.R."/>
            <person name="Busche M."/>
            <person name="Martinez R.E."/>
            <person name="Harper L.C."/>
            <person name="Reiser L."/>
            <person name="Szakonyi D."/>
            <person name="Merchante C."/>
            <person name="Lan T."/>
            <person name="Xiong W."/>
            <person name="Mo B."/>
            <person name="Tang G."/>
            <person name="Chen X."/>
            <person name="Bailey-Serres J."/>
            <person name="Browning K.S."/>
            <person name="Brunkard J.O."/>
        </authorList>
    </citation>
    <scope>NOMENCLATURE</scope>
</reference>